<proteinExistence type="inferred from homology"/>
<gene>
    <name evidence="1" type="primary">cbiD</name>
    <name type="ordered locus">PP_4831</name>
</gene>
<keyword id="KW-0169">Cobalamin biosynthesis</keyword>
<keyword id="KW-0489">Methyltransferase</keyword>
<keyword id="KW-1185">Reference proteome</keyword>
<keyword id="KW-0949">S-adenosyl-L-methionine</keyword>
<keyword id="KW-0808">Transferase</keyword>
<name>CBID_PSEPK</name>
<comment type="function">
    <text evidence="1">Catalyzes the methylation of C-1 in cobalt-precorrin-5B to form cobalt-precorrin-6A.</text>
</comment>
<comment type="catalytic activity">
    <reaction evidence="1">
        <text>Co-precorrin-5B + S-adenosyl-L-methionine = Co-precorrin-6A + S-adenosyl-L-homocysteine</text>
        <dbReference type="Rhea" id="RHEA:26285"/>
        <dbReference type="ChEBI" id="CHEBI:57856"/>
        <dbReference type="ChEBI" id="CHEBI:59789"/>
        <dbReference type="ChEBI" id="CHEBI:60063"/>
        <dbReference type="ChEBI" id="CHEBI:60064"/>
        <dbReference type="EC" id="2.1.1.195"/>
    </reaction>
</comment>
<comment type="pathway">
    <text evidence="1">Cofactor biosynthesis; adenosylcobalamin biosynthesis; cob(II)yrinate a,c-diamide from sirohydrochlorin (anaerobic route): step 6/10.</text>
</comment>
<comment type="similarity">
    <text evidence="1">Belongs to the CbiD family.</text>
</comment>
<sequence>MREETREQPAPLRSGLTTGSCATATSLAAAKLLLTGQRNDAVDITLPKGKVVQMRLEFCRLIGECAEAGTLKDAGDDPDVTHGALVYSQVRLLVEPGIGFVAGSGVGTVTRPGLVLAVGEPAINPVPRRMISEHLQHLADACGYLGGFEVTVNVQGGEQLALKTMNPRLGILGGLSILGTSGIVRPFSCAAYIASIHQGIDVAHTNGYTHIAACTGNASEDTMRRVYGLPEIALIEMGDFVGAVLKHLRKVPVPRLTLCGGFGKISKLAAGHMDLHSRHSSIDLPQLAGWAADIGADEALQAAISGANTSQQALALAHAAGIALGDAVCAHALAFARSVVPAQVHVEVFAIDRQGGIVGQAGVQ</sequence>
<evidence type="ECO:0000255" key="1">
    <source>
        <dbReference type="HAMAP-Rule" id="MF_00787"/>
    </source>
</evidence>
<accession>Q88DJ4</accession>
<reference key="1">
    <citation type="journal article" date="2002" name="Environ. Microbiol.">
        <title>Complete genome sequence and comparative analysis of the metabolically versatile Pseudomonas putida KT2440.</title>
        <authorList>
            <person name="Nelson K.E."/>
            <person name="Weinel C."/>
            <person name="Paulsen I.T."/>
            <person name="Dodson R.J."/>
            <person name="Hilbert H."/>
            <person name="Martins dos Santos V.A.P."/>
            <person name="Fouts D.E."/>
            <person name="Gill S.R."/>
            <person name="Pop M."/>
            <person name="Holmes M."/>
            <person name="Brinkac L.M."/>
            <person name="Beanan M.J."/>
            <person name="DeBoy R.T."/>
            <person name="Daugherty S.C."/>
            <person name="Kolonay J.F."/>
            <person name="Madupu R."/>
            <person name="Nelson W.C."/>
            <person name="White O."/>
            <person name="Peterson J.D."/>
            <person name="Khouri H.M."/>
            <person name="Hance I."/>
            <person name="Chris Lee P."/>
            <person name="Holtzapple E.K."/>
            <person name="Scanlan D."/>
            <person name="Tran K."/>
            <person name="Moazzez A."/>
            <person name="Utterback T.R."/>
            <person name="Rizzo M."/>
            <person name="Lee K."/>
            <person name="Kosack D."/>
            <person name="Moestl D."/>
            <person name="Wedler H."/>
            <person name="Lauber J."/>
            <person name="Stjepandic D."/>
            <person name="Hoheisel J."/>
            <person name="Straetz M."/>
            <person name="Heim S."/>
            <person name="Kiewitz C."/>
            <person name="Eisen J.A."/>
            <person name="Timmis K.N."/>
            <person name="Duesterhoeft A."/>
            <person name="Tuemmler B."/>
            <person name="Fraser C.M."/>
        </authorList>
    </citation>
    <scope>NUCLEOTIDE SEQUENCE [LARGE SCALE GENOMIC DNA]</scope>
    <source>
        <strain>ATCC 47054 / DSM 6125 / CFBP 8728 / NCIMB 11950 / KT2440</strain>
    </source>
</reference>
<dbReference type="EC" id="2.1.1.195" evidence="1"/>
<dbReference type="EMBL" id="AE015451">
    <property type="protein sequence ID" value="AAN70400.1"/>
    <property type="molecule type" value="Genomic_DNA"/>
</dbReference>
<dbReference type="RefSeq" id="NP_746936.1">
    <property type="nucleotide sequence ID" value="NC_002947.4"/>
</dbReference>
<dbReference type="RefSeq" id="WP_010955439.1">
    <property type="nucleotide sequence ID" value="NZ_CP169744.1"/>
</dbReference>
<dbReference type="SMR" id="Q88DJ4"/>
<dbReference type="STRING" id="160488.PP_4831"/>
<dbReference type="PaxDb" id="160488-PP_4831"/>
<dbReference type="KEGG" id="ppu:PP_4831"/>
<dbReference type="PATRIC" id="fig|160488.4.peg.5162"/>
<dbReference type="eggNOG" id="COG1903">
    <property type="taxonomic scope" value="Bacteria"/>
</dbReference>
<dbReference type="HOGENOM" id="CLU_041273_0_0_6"/>
<dbReference type="OrthoDB" id="6439987at2"/>
<dbReference type="PhylomeDB" id="Q88DJ4"/>
<dbReference type="BioCyc" id="PPUT160488:G1G01-5171-MONOMER"/>
<dbReference type="UniPathway" id="UPA00148">
    <property type="reaction ID" value="UER00227"/>
</dbReference>
<dbReference type="Proteomes" id="UP000000556">
    <property type="component" value="Chromosome"/>
</dbReference>
<dbReference type="GO" id="GO:0043780">
    <property type="term" value="F:cobalt-precorrin-5B C1-methyltransferase activity"/>
    <property type="evidence" value="ECO:0007669"/>
    <property type="project" value="RHEA"/>
</dbReference>
<dbReference type="GO" id="GO:0019251">
    <property type="term" value="P:anaerobic cobalamin biosynthetic process"/>
    <property type="evidence" value="ECO:0007669"/>
    <property type="project" value="UniProtKB-UniRule"/>
</dbReference>
<dbReference type="GO" id="GO:0032259">
    <property type="term" value="P:methylation"/>
    <property type="evidence" value="ECO:0007669"/>
    <property type="project" value="UniProtKB-KW"/>
</dbReference>
<dbReference type="Gene3D" id="3.30.2110.10">
    <property type="entry name" value="CbiD-like"/>
    <property type="match status" value="1"/>
</dbReference>
<dbReference type="HAMAP" id="MF_00787">
    <property type="entry name" value="CbiD"/>
    <property type="match status" value="1"/>
</dbReference>
<dbReference type="InterPro" id="IPR002748">
    <property type="entry name" value="CbiD"/>
</dbReference>
<dbReference type="InterPro" id="IPR036074">
    <property type="entry name" value="CbiD_sf"/>
</dbReference>
<dbReference type="NCBIfam" id="TIGR00312">
    <property type="entry name" value="cbiD"/>
    <property type="match status" value="1"/>
</dbReference>
<dbReference type="NCBIfam" id="NF000849">
    <property type="entry name" value="PRK00075.1-1"/>
    <property type="match status" value="1"/>
</dbReference>
<dbReference type="PANTHER" id="PTHR35863">
    <property type="entry name" value="COBALT-PRECORRIN-5B C(1)-METHYLTRANSFERASE"/>
    <property type="match status" value="1"/>
</dbReference>
<dbReference type="PANTHER" id="PTHR35863:SF1">
    <property type="entry name" value="COBALT-PRECORRIN-5B C(1)-METHYLTRANSFERASE"/>
    <property type="match status" value="1"/>
</dbReference>
<dbReference type="Pfam" id="PF01888">
    <property type="entry name" value="CbiD"/>
    <property type="match status" value="1"/>
</dbReference>
<dbReference type="PIRSF" id="PIRSF026782">
    <property type="entry name" value="CbiD"/>
    <property type="match status" value="1"/>
</dbReference>
<dbReference type="SUPFAM" id="SSF111342">
    <property type="entry name" value="CbiD-like"/>
    <property type="match status" value="1"/>
</dbReference>
<protein>
    <recommendedName>
        <fullName evidence="1">Cobalt-precorrin-5B C(1)-methyltransferase</fullName>
        <ecNumber evidence="1">2.1.1.195</ecNumber>
    </recommendedName>
    <alternativeName>
        <fullName evidence="1">Cobalt-precorrin-6A synthase</fullName>
    </alternativeName>
</protein>
<organism>
    <name type="scientific">Pseudomonas putida (strain ATCC 47054 / DSM 6125 / CFBP 8728 / NCIMB 11950 / KT2440)</name>
    <dbReference type="NCBI Taxonomy" id="160488"/>
    <lineage>
        <taxon>Bacteria</taxon>
        <taxon>Pseudomonadati</taxon>
        <taxon>Pseudomonadota</taxon>
        <taxon>Gammaproteobacteria</taxon>
        <taxon>Pseudomonadales</taxon>
        <taxon>Pseudomonadaceae</taxon>
        <taxon>Pseudomonas</taxon>
    </lineage>
</organism>
<feature type="chain" id="PRO_0000141679" description="Cobalt-precorrin-5B C(1)-methyltransferase">
    <location>
        <begin position="1"/>
        <end position="364"/>
    </location>
</feature>